<comment type="similarity">
    <text evidence="1">Belongs to the DNA glycosylase MPG family.</text>
</comment>
<feature type="chain" id="PRO_1000050999" description="Putative 3-methyladenine DNA glycosylase">
    <location>
        <begin position="1"/>
        <end position="183"/>
    </location>
</feature>
<reference key="1">
    <citation type="submission" date="2007-09" db="EMBL/GenBank/DDBJ databases">
        <title>Complete genome sequence of Rickettsia rickettsii.</title>
        <authorList>
            <person name="Madan A."/>
            <person name="Fahey J."/>
            <person name="Helton E."/>
            <person name="Ketteman M."/>
            <person name="Madan A."/>
            <person name="Rodrigues S."/>
            <person name="Sanchez A."/>
            <person name="Dasch G."/>
            <person name="Eremeeva M."/>
        </authorList>
    </citation>
    <scope>NUCLEOTIDE SEQUENCE [LARGE SCALE GENOMIC DNA]</scope>
    <source>
        <strain>Sheila Smith</strain>
    </source>
</reference>
<dbReference type="EC" id="3.2.2.-" evidence="1"/>
<dbReference type="EMBL" id="CP000848">
    <property type="protein sequence ID" value="ABV76085.1"/>
    <property type="molecule type" value="Genomic_DNA"/>
</dbReference>
<dbReference type="RefSeq" id="WP_012150679.1">
    <property type="nucleotide sequence ID" value="NZ_CP121767.1"/>
</dbReference>
<dbReference type="SMR" id="A8GRR0"/>
<dbReference type="GeneID" id="79937239"/>
<dbReference type="KEGG" id="rri:A1G_02715"/>
<dbReference type="HOGENOM" id="CLU_060471_4_1_5"/>
<dbReference type="Proteomes" id="UP000006832">
    <property type="component" value="Chromosome"/>
</dbReference>
<dbReference type="GO" id="GO:0003905">
    <property type="term" value="F:alkylbase DNA N-glycosylase activity"/>
    <property type="evidence" value="ECO:0007669"/>
    <property type="project" value="InterPro"/>
</dbReference>
<dbReference type="GO" id="GO:0003677">
    <property type="term" value="F:DNA binding"/>
    <property type="evidence" value="ECO:0007669"/>
    <property type="project" value="InterPro"/>
</dbReference>
<dbReference type="GO" id="GO:0006284">
    <property type="term" value="P:base-excision repair"/>
    <property type="evidence" value="ECO:0007669"/>
    <property type="project" value="InterPro"/>
</dbReference>
<dbReference type="CDD" id="cd00540">
    <property type="entry name" value="AAG"/>
    <property type="match status" value="1"/>
</dbReference>
<dbReference type="Gene3D" id="3.10.300.10">
    <property type="entry name" value="Methylpurine-DNA glycosylase (MPG)"/>
    <property type="match status" value="2"/>
</dbReference>
<dbReference type="HAMAP" id="MF_00527">
    <property type="entry name" value="3MGH"/>
    <property type="match status" value="1"/>
</dbReference>
<dbReference type="InterPro" id="IPR011034">
    <property type="entry name" value="Formyl_transferase-like_C_sf"/>
</dbReference>
<dbReference type="InterPro" id="IPR003180">
    <property type="entry name" value="MPG"/>
</dbReference>
<dbReference type="InterPro" id="IPR036995">
    <property type="entry name" value="MPG_sf"/>
</dbReference>
<dbReference type="NCBIfam" id="TIGR00567">
    <property type="entry name" value="3mg"/>
    <property type="match status" value="1"/>
</dbReference>
<dbReference type="NCBIfam" id="NF002004">
    <property type="entry name" value="PRK00802.1-4"/>
    <property type="match status" value="1"/>
</dbReference>
<dbReference type="PANTHER" id="PTHR10429">
    <property type="entry name" value="DNA-3-METHYLADENINE GLYCOSYLASE"/>
    <property type="match status" value="1"/>
</dbReference>
<dbReference type="PANTHER" id="PTHR10429:SF0">
    <property type="entry name" value="DNA-3-METHYLADENINE GLYCOSYLASE"/>
    <property type="match status" value="1"/>
</dbReference>
<dbReference type="Pfam" id="PF02245">
    <property type="entry name" value="Pur_DNA_glyco"/>
    <property type="match status" value="1"/>
</dbReference>
<dbReference type="SUPFAM" id="SSF50486">
    <property type="entry name" value="FMT C-terminal domain-like"/>
    <property type="match status" value="1"/>
</dbReference>
<organism>
    <name type="scientific">Rickettsia rickettsii (strain Sheila Smith)</name>
    <dbReference type="NCBI Taxonomy" id="392021"/>
    <lineage>
        <taxon>Bacteria</taxon>
        <taxon>Pseudomonadati</taxon>
        <taxon>Pseudomonadota</taxon>
        <taxon>Alphaproteobacteria</taxon>
        <taxon>Rickettsiales</taxon>
        <taxon>Rickettsiaceae</taxon>
        <taxon>Rickettsieae</taxon>
        <taxon>Rickettsia</taxon>
        <taxon>spotted fever group</taxon>
    </lineage>
</organism>
<evidence type="ECO:0000255" key="1">
    <source>
        <dbReference type="HAMAP-Rule" id="MF_00527"/>
    </source>
</evidence>
<name>3MGH_RICRS</name>
<keyword id="KW-0227">DNA damage</keyword>
<keyword id="KW-0234">DNA repair</keyword>
<keyword id="KW-0378">Hydrolase</keyword>
<accession>A8GRR0</accession>
<protein>
    <recommendedName>
        <fullName evidence="1">Putative 3-methyladenine DNA glycosylase</fullName>
        <ecNumber evidence="1">3.2.2.-</ecNumber>
    </recommendedName>
</protein>
<sequence length="183" mass="20520">MNKLIPLPREFFARDTNVVSTELIGKTLYFQGKTAIITETESYIGQNDPACHAARGRTKRTDIMFGPAGFSYVYLIYGMYYCLNFVTEAKGFPAATLIRGVHVISPENLYLNGPGKLCKYLGINISHNKCDLINNNEFFVGDIGLKLPYSTTARIGITKGTDKLWRYVVTDITNLISQYNVQP</sequence>
<proteinExistence type="inferred from homology"/>
<gene>
    <name type="ordered locus">A1G_02715</name>
</gene>